<protein>
    <recommendedName>
        <fullName evidence="1">RNA pyrophosphohydrolase</fullName>
        <ecNumber evidence="1">3.6.1.-</ecNumber>
    </recommendedName>
    <alternativeName>
        <fullName evidence="1">(Di)nucleoside polyphosphate hydrolase</fullName>
    </alternativeName>
</protein>
<proteinExistence type="inferred from homology"/>
<feature type="chain" id="PRO_0000231901" description="RNA pyrophosphohydrolase">
    <location>
        <begin position="1"/>
        <end position="216"/>
    </location>
</feature>
<feature type="domain" description="Nudix hydrolase" evidence="1">
    <location>
        <begin position="6"/>
        <end position="149"/>
    </location>
</feature>
<feature type="region of interest" description="Disordered" evidence="2">
    <location>
        <begin position="159"/>
        <end position="188"/>
    </location>
</feature>
<feature type="short sequence motif" description="Nudix box">
    <location>
        <begin position="38"/>
        <end position="59"/>
    </location>
</feature>
<accession>Q62GV7</accession>
<organism>
    <name type="scientific">Burkholderia mallei (strain ATCC 23344)</name>
    <dbReference type="NCBI Taxonomy" id="243160"/>
    <lineage>
        <taxon>Bacteria</taxon>
        <taxon>Pseudomonadati</taxon>
        <taxon>Pseudomonadota</taxon>
        <taxon>Betaproteobacteria</taxon>
        <taxon>Burkholderiales</taxon>
        <taxon>Burkholderiaceae</taxon>
        <taxon>Burkholderia</taxon>
        <taxon>pseudomallei group</taxon>
    </lineage>
</organism>
<comment type="function">
    <text evidence="1">Accelerates the degradation of transcripts by removing pyrophosphate from the 5'-end of triphosphorylated RNA, leading to a more labile monophosphorylated state that can stimulate subsequent ribonuclease cleavage.</text>
</comment>
<comment type="cofactor">
    <cofactor evidence="1">
        <name>a divalent metal cation</name>
        <dbReference type="ChEBI" id="CHEBI:60240"/>
    </cofactor>
</comment>
<comment type="similarity">
    <text evidence="1">Belongs to the Nudix hydrolase family. RppH subfamily.</text>
</comment>
<name>RPPH_BURMA</name>
<evidence type="ECO:0000255" key="1">
    <source>
        <dbReference type="HAMAP-Rule" id="MF_00298"/>
    </source>
</evidence>
<evidence type="ECO:0000256" key="2">
    <source>
        <dbReference type="SAM" id="MobiDB-lite"/>
    </source>
</evidence>
<keyword id="KW-0378">Hydrolase</keyword>
<keyword id="KW-1185">Reference proteome</keyword>
<gene>
    <name evidence="1" type="primary">rppH</name>
    <name evidence="1" type="synonym">nudH</name>
    <name type="ordered locus">BMA2518</name>
</gene>
<sequence>MLDREGFRPNVGIILLNAHNEVFWGKRLREHSWQFPQGGIKYGETPMQAMYRELHEETGLLPEHVKIIGRTRDWLRYEVPDKFIKREVRGHYRGQKQIWFLLRMVGRDCDICLRATDHPEFDAWRWNEYWVPLDAVIEFKRDVYQLALTELSRFLRRPAQRTDKSRGPRAPRYPRVANGHAASEAPAAIDTSAVCSEVEPGANALDETPPRVSLRD</sequence>
<dbReference type="EC" id="3.6.1.-" evidence="1"/>
<dbReference type="EMBL" id="CP000010">
    <property type="protein sequence ID" value="AAU50102.1"/>
    <property type="molecule type" value="Genomic_DNA"/>
</dbReference>
<dbReference type="RefSeq" id="WP_004194263.1">
    <property type="nucleotide sequence ID" value="NC_006348.1"/>
</dbReference>
<dbReference type="RefSeq" id="YP_104064.1">
    <property type="nucleotide sequence ID" value="NC_006348.1"/>
</dbReference>
<dbReference type="SMR" id="Q62GV7"/>
<dbReference type="KEGG" id="bma:BMA2518"/>
<dbReference type="PATRIC" id="fig|243160.12.peg.2597"/>
<dbReference type="eggNOG" id="COG0494">
    <property type="taxonomic scope" value="Bacteria"/>
</dbReference>
<dbReference type="HOGENOM" id="CLU_087195_0_1_4"/>
<dbReference type="Proteomes" id="UP000006693">
    <property type="component" value="Chromosome 1"/>
</dbReference>
<dbReference type="GO" id="GO:0016462">
    <property type="term" value="F:pyrophosphatase activity"/>
    <property type="evidence" value="ECO:0007669"/>
    <property type="project" value="UniProtKB-ARBA"/>
</dbReference>
<dbReference type="CDD" id="cd03671">
    <property type="entry name" value="NUDIX_Ap4A_hydrolase_plant_like"/>
    <property type="match status" value="1"/>
</dbReference>
<dbReference type="Gene3D" id="3.90.79.10">
    <property type="entry name" value="Nucleoside Triphosphate Pyrophosphohydrolase"/>
    <property type="match status" value="1"/>
</dbReference>
<dbReference type="HAMAP" id="MF_00298">
    <property type="entry name" value="Nudix_RppH"/>
    <property type="match status" value="1"/>
</dbReference>
<dbReference type="InterPro" id="IPR020476">
    <property type="entry name" value="Nudix_hydrolase"/>
</dbReference>
<dbReference type="InterPro" id="IPR015797">
    <property type="entry name" value="NUDIX_hydrolase-like_dom_sf"/>
</dbReference>
<dbReference type="InterPro" id="IPR020084">
    <property type="entry name" value="NUDIX_hydrolase_CS"/>
</dbReference>
<dbReference type="InterPro" id="IPR000086">
    <property type="entry name" value="NUDIX_hydrolase_dom"/>
</dbReference>
<dbReference type="InterPro" id="IPR022927">
    <property type="entry name" value="RppH"/>
</dbReference>
<dbReference type="NCBIfam" id="NF001935">
    <property type="entry name" value="PRK00714.1-2"/>
    <property type="match status" value="1"/>
</dbReference>
<dbReference type="NCBIfam" id="NF001937">
    <property type="entry name" value="PRK00714.1-4"/>
    <property type="match status" value="1"/>
</dbReference>
<dbReference type="NCBIfam" id="NF001938">
    <property type="entry name" value="PRK00714.1-5"/>
    <property type="match status" value="1"/>
</dbReference>
<dbReference type="PANTHER" id="PTHR43736">
    <property type="entry name" value="ADP-RIBOSE PYROPHOSPHATASE"/>
    <property type="match status" value="1"/>
</dbReference>
<dbReference type="PANTHER" id="PTHR43736:SF1">
    <property type="entry name" value="DIHYDRONEOPTERIN TRIPHOSPHATE DIPHOSPHATASE"/>
    <property type="match status" value="1"/>
</dbReference>
<dbReference type="Pfam" id="PF00293">
    <property type="entry name" value="NUDIX"/>
    <property type="match status" value="1"/>
</dbReference>
<dbReference type="PRINTS" id="PR00502">
    <property type="entry name" value="NUDIXFAMILY"/>
</dbReference>
<dbReference type="SUPFAM" id="SSF55811">
    <property type="entry name" value="Nudix"/>
    <property type="match status" value="1"/>
</dbReference>
<dbReference type="PROSITE" id="PS51462">
    <property type="entry name" value="NUDIX"/>
    <property type="match status" value="1"/>
</dbReference>
<dbReference type="PROSITE" id="PS00893">
    <property type="entry name" value="NUDIX_BOX"/>
    <property type="match status" value="1"/>
</dbReference>
<reference key="1">
    <citation type="journal article" date="2004" name="Proc. Natl. Acad. Sci. U.S.A.">
        <title>Structural flexibility in the Burkholderia mallei genome.</title>
        <authorList>
            <person name="Nierman W.C."/>
            <person name="DeShazer D."/>
            <person name="Kim H.S."/>
            <person name="Tettelin H."/>
            <person name="Nelson K.E."/>
            <person name="Feldblyum T.V."/>
            <person name="Ulrich R.L."/>
            <person name="Ronning C.M."/>
            <person name="Brinkac L.M."/>
            <person name="Daugherty S.C."/>
            <person name="Davidsen T.D."/>
            <person name="DeBoy R.T."/>
            <person name="Dimitrov G."/>
            <person name="Dodson R.J."/>
            <person name="Durkin A.S."/>
            <person name="Gwinn M.L."/>
            <person name="Haft D.H."/>
            <person name="Khouri H.M."/>
            <person name="Kolonay J.F."/>
            <person name="Madupu R."/>
            <person name="Mohammoud Y."/>
            <person name="Nelson W.C."/>
            <person name="Radune D."/>
            <person name="Romero C.M."/>
            <person name="Sarria S."/>
            <person name="Selengut J."/>
            <person name="Shamblin C."/>
            <person name="Sullivan S.A."/>
            <person name="White O."/>
            <person name="Yu Y."/>
            <person name="Zafar N."/>
            <person name="Zhou L."/>
            <person name="Fraser C.M."/>
        </authorList>
    </citation>
    <scope>NUCLEOTIDE SEQUENCE [LARGE SCALE GENOMIC DNA]</scope>
    <source>
        <strain>ATCC 23344</strain>
    </source>
</reference>